<name>ECOT_SALCH</name>
<proteinExistence type="inferred from homology"/>
<reference key="1">
    <citation type="journal article" date="2005" name="Nucleic Acids Res.">
        <title>The genome sequence of Salmonella enterica serovar Choleraesuis, a highly invasive and resistant zoonotic pathogen.</title>
        <authorList>
            <person name="Chiu C.-H."/>
            <person name="Tang P."/>
            <person name="Chu C."/>
            <person name="Hu S."/>
            <person name="Bao Q."/>
            <person name="Yu J."/>
            <person name="Chou Y.-Y."/>
            <person name="Wang H.-S."/>
            <person name="Lee Y.-S."/>
        </authorList>
    </citation>
    <scope>NUCLEOTIDE SEQUENCE [LARGE SCALE GENOMIC DNA]</scope>
    <source>
        <strain>SC-B67</strain>
    </source>
</reference>
<feature type="signal peptide" evidence="1">
    <location>
        <begin position="1"/>
        <end position="18"/>
    </location>
</feature>
<feature type="chain" id="PRO_0000225649" description="Ecotin">
    <location>
        <begin position="19"/>
        <end position="162"/>
    </location>
</feature>
<feature type="site" description="Reactive bond" evidence="1">
    <location>
        <begin position="104"/>
        <end position="105"/>
    </location>
</feature>
<feature type="disulfide bond" evidence="1">
    <location>
        <begin position="70"/>
        <end position="107"/>
    </location>
</feature>
<accession>Q57M90</accession>
<comment type="function">
    <text evidence="1">General inhibitor of pancreatic serine proteases: inhibits chymotrypsin, trypsin, elastases, factor X, kallikrein as well as a variety of other proteases.</text>
</comment>
<comment type="subunit">
    <text evidence="1">Homodimer.</text>
</comment>
<comment type="subcellular location">
    <subcellularLocation>
        <location evidence="1">Periplasm</location>
    </subcellularLocation>
</comment>
<comment type="similarity">
    <text evidence="1">Belongs to the protease inhibitor I11 (ecotin) family.</text>
</comment>
<keyword id="KW-1015">Disulfide bond</keyword>
<keyword id="KW-0574">Periplasm</keyword>
<keyword id="KW-0646">Protease inhibitor</keyword>
<keyword id="KW-0722">Serine protease inhibitor</keyword>
<keyword id="KW-0732">Signal</keyword>
<protein>
    <recommendedName>
        <fullName evidence="1">Ecotin</fullName>
    </recommendedName>
</protein>
<sequence>MFVPAVVFAALASTSAWANNGDTAQPLEKIAPYPQAEKGMKRQVITLTPQQDESTLKVELLIGQTLNVDCNQHRLGGTLETKTLEGWGYDYYVFDNVTSPVSTMMACPDGKKEQKFVTAWLGEDGMVRYNSKLPIVVYTPANVDVKYRIWKADANVQNAVAR</sequence>
<gene>
    <name evidence="1" type="primary">eco</name>
    <name type="ordered locus">SCH_2266</name>
</gene>
<dbReference type="EMBL" id="AE017220">
    <property type="protein sequence ID" value="AAX66172.1"/>
    <property type="molecule type" value="Genomic_DNA"/>
</dbReference>
<dbReference type="SMR" id="Q57M90"/>
<dbReference type="MEROPS" id="I11.001"/>
<dbReference type="KEGG" id="sec:SCH_2266"/>
<dbReference type="HOGENOM" id="CLU_111565_0_0_6"/>
<dbReference type="Proteomes" id="UP000000538">
    <property type="component" value="Chromosome"/>
</dbReference>
<dbReference type="GO" id="GO:0042597">
    <property type="term" value="C:periplasmic space"/>
    <property type="evidence" value="ECO:0007669"/>
    <property type="project" value="UniProtKB-SubCell"/>
</dbReference>
<dbReference type="GO" id="GO:0004867">
    <property type="term" value="F:serine-type endopeptidase inhibitor activity"/>
    <property type="evidence" value="ECO:0007669"/>
    <property type="project" value="UniProtKB-UniRule"/>
</dbReference>
<dbReference type="CDD" id="cd00242">
    <property type="entry name" value="Ecotin"/>
    <property type="match status" value="1"/>
</dbReference>
<dbReference type="FunFam" id="2.60.40.550:FF:000001">
    <property type="entry name" value="Ecotin"/>
    <property type="match status" value="1"/>
</dbReference>
<dbReference type="FunFam" id="4.10.1230.10:FF:000001">
    <property type="entry name" value="Ecotin"/>
    <property type="match status" value="1"/>
</dbReference>
<dbReference type="Gene3D" id="2.60.40.550">
    <property type="entry name" value="Ecotin"/>
    <property type="match status" value="1"/>
</dbReference>
<dbReference type="Gene3D" id="4.10.1230.10">
    <property type="entry name" value="Ecotin, trypsin inhibitor"/>
    <property type="match status" value="1"/>
</dbReference>
<dbReference type="HAMAP" id="MF_00706">
    <property type="entry name" value="Ecotin"/>
    <property type="match status" value="1"/>
</dbReference>
<dbReference type="InterPro" id="IPR027438">
    <property type="entry name" value="Ecotin_C"/>
</dbReference>
<dbReference type="InterPro" id="IPR036198">
    <property type="entry name" value="Ecotin_sf"/>
</dbReference>
<dbReference type="InterPro" id="IPR005658">
    <property type="entry name" value="Prot_inh_ecotin"/>
</dbReference>
<dbReference type="InterPro" id="IPR023084">
    <property type="entry name" value="Prot_inh_ecotin_gammaproteobac"/>
</dbReference>
<dbReference type="NCBIfam" id="NF002987">
    <property type="entry name" value="PRK03719.1"/>
    <property type="match status" value="1"/>
</dbReference>
<dbReference type="PANTHER" id="PTHR35890">
    <property type="match status" value="1"/>
</dbReference>
<dbReference type="PANTHER" id="PTHR35890:SF3">
    <property type="entry name" value="ECOTIN"/>
    <property type="match status" value="1"/>
</dbReference>
<dbReference type="Pfam" id="PF03974">
    <property type="entry name" value="Ecotin"/>
    <property type="match status" value="1"/>
</dbReference>
<dbReference type="PIRSF" id="PIRSF006865">
    <property type="entry name" value="Prot_inh_ecotin"/>
    <property type="match status" value="1"/>
</dbReference>
<dbReference type="SUPFAM" id="SSF49772">
    <property type="entry name" value="Ecotin, trypsin inhibitor"/>
    <property type="match status" value="1"/>
</dbReference>
<evidence type="ECO:0000255" key="1">
    <source>
        <dbReference type="HAMAP-Rule" id="MF_00706"/>
    </source>
</evidence>
<organism>
    <name type="scientific">Salmonella choleraesuis (strain SC-B67)</name>
    <dbReference type="NCBI Taxonomy" id="321314"/>
    <lineage>
        <taxon>Bacteria</taxon>
        <taxon>Pseudomonadati</taxon>
        <taxon>Pseudomonadota</taxon>
        <taxon>Gammaproteobacteria</taxon>
        <taxon>Enterobacterales</taxon>
        <taxon>Enterobacteriaceae</taxon>
        <taxon>Salmonella</taxon>
    </lineage>
</organism>